<keyword id="KW-0963">Cytoplasm</keyword>
<keyword id="KW-1015">Disulfide bond</keyword>
<keyword id="KW-0274">FAD</keyword>
<keyword id="KW-0285">Flavoprotein</keyword>
<keyword id="KW-0520">NAD</keyword>
<keyword id="KW-0560">Oxidoreductase</keyword>
<keyword id="KW-0676">Redox-active center</keyword>
<feature type="chain" id="PRO_0000068020" description="Dihydrolipoyl dehydrogenase">
    <location>
        <begin position="1"/>
        <end position="476"/>
    </location>
</feature>
<feature type="active site" description="Proton acceptor" evidence="1">
    <location>
        <position position="446"/>
    </location>
</feature>
<feature type="binding site" evidence="1">
    <location>
        <begin position="36"/>
        <end position="45"/>
    </location>
    <ligand>
        <name>FAD</name>
        <dbReference type="ChEBI" id="CHEBI:57692"/>
    </ligand>
</feature>
<feature type="binding site" evidence="1">
    <location>
        <position position="54"/>
    </location>
    <ligand>
        <name>FAD</name>
        <dbReference type="ChEBI" id="CHEBI:57692"/>
    </ligand>
</feature>
<feature type="binding site" evidence="1">
    <location>
        <position position="117"/>
    </location>
    <ligand>
        <name>FAD</name>
        <dbReference type="ChEBI" id="CHEBI:57692"/>
    </ligand>
</feature>
<feature type="binding site" evidence="1">
    <location>
        <begin position="182"/>
        <end position="186"/>
    </location>
    <ligand>
        <name>NAD(+)</name>
        <dbReference type="ChEBI" id="CHEBI:57540"/>
    </ligand>
</feature>
<feature type="binding site" evidence="1">
    <location>
        <position position="205"/>
    </location>
    <ligand>
        <name>NAD(+)</name>
        <dbReference type="ChEBI" id="CHEBI:57540"/>
    </ligand>
</feature>
<feature type="binding site" evidence="1">
    <location>
        <position position="238"/>
    </location>
    <ligand>
        <name>NAD(+)</name>
        <dbReference type="ChEBI" id="CHEBI:57540"/>
    </ligand>
</feature>
<feature type="binding site" evidence="1">
    <location>
        <begin position="271"/>
        <end position="274"/>
    </location>
    <ligand>
        <name>NAD(+)</name>
        <dbReference type="ChEBI" id="CHEBI:57540"/>
    </ligand>
</feature>
<feature type="binding site" evidence="1">
    <location>
        <position position="314"/>
    </location>
    <ligand>
        <name>FAD</name>
        <dbReference type="ChEBI" id="CHEBI:57692"/>
    </ligand>
</feature>
<feature type="binding site" evidence="1">
    <location>
        <position position="322"/>
    </location>
    <ligand>
        <name>FAD</name>
        <dbReference type="ChEBI" id="CHEBI:57692"/>
    </ligand>
</feature>
<feature type="disulfide bond" description="Redox-active" evidence="1">
    <location>
        <begin position="45"/>
        <end position="50"/>
    </location>
</feature>
<proteinExistence type="inferred from homology"/>
<gene>
    <name type="primary">lpdA</name>
    <name type="ordered locus">BUsg_201</name>
</gene>
<protein>
    <recommendedName>
        <fullName>Dihydrolipoyl dehydrogenase</fullName>
        <ecNumber>1.8.1.4</ecNumber>
    </recommendedName>
    <alternativeName>
        <fullName>Dihydrolipoamide dehydrogenase</fullName>
    </alternativeName>
    <alternativeName>
        <fullName>E3 component of pyruvate and 2-oxoglutarate dehydrogenases complexes</fullName>
    </alternativeName>
</protein>
<reference key="1">
    <citation type="journal article" date="2002" name="Science">
        <title>50 million years of genomic stasis in endosymbiotic bacteria.</title>
        <authorList>
            <person name="Tamas I."/>
            <person name="Klasson L."/>
            <person name="Canbaeck B."/>
            <person name="Naeslund A.K."/>
            <person name="Eriksson A.-S."/>
            <person name="Wernegreen J.J."/>
            <person name="Sandstroem J.P."/>
            <person name="Moran N.A."/>
            <person name="Andersson S.G.E."/>
        </authorList>
    </citation>
    <scope>NUCLEOTIDE SEQUENCE [LARGE SCALE GENOMIC DNA]</scope>
    <source>
        <strain>Sg</strain>
    </source>
</reference>
<sequence length="476" mass="52187">MHQEIQSEVVIIGSGPAGYSAAFRCADLGLETVLIEHQERLGGVCLNVGCIPSKSLLHIAKIIKDASELSESGVFFNKPIIDIKKINNWKEKIIKKLTTGLSNMGEKRKVRIVQGKALFNTDHSVLVKNKKNDFTIFFKHAIIATGSKPIKIPSLPNEDNRIWNSTDALSLKSIPNRFLIIGGGIIGLEMATIYSALGSKVDIVDRFNAFLPSVDKDITDIYIKSIKKRFKLLLNTHVKSVEKSKDNDLIVKIAEENSDENVCCYDNILVAIGRSPNVDFLGLEKIGLKLNESGFIEINQQLKTNISHIYAIGDVTGFPMLAHKAVQQAHIAAEVISGKKHYFEPKVIPSVAYTDPEIAWVGLSEKEAENNDIDYEVSLFPWSASGRAHASNCTLGMTKLIFNKNTNKIIGGSIIGTNASELISEIGLAIEMGSDAEDISLTIHPHPTLSESISLASEVFQGTITDLLNLKKSLLN</sequence>
<accession>Q8K9T7</accession>
<evidence type="ECO:0000250" key="1"/>
<evidence type="ECO:0000305" key="2"/>
<comment type="function">
    <text evidence="1">Lipoamide dehydrogenase is a component of the alpha-ketoacid dehydrogenase complexes.</text>
</comment>
<comment type="catalytic activity">
    <reaction>
        <text>N(6)-[(R)-dihydrolipoyl]-L-lysyl-[protein] + NAD(+) = N(6)-[(R)-lipoyl]-L-lysyl-[protein] + NADH + H(+)</text>
        <dbReference type="Rhea" id="RHEA:15045"/>
        <dbReference type="Rhea" id="RHEA-COMP:10474"/>
        <dbReference type="Rhea" id="RHEA-COMP:10475"/>
        <dbReference type="ChEBI" id="CHEBI:15378"/>
        <dbReference type="ChEBI" id="CHEBI:57540"/>
        <dbReference type="ChEBI" id="CHEBI:57945"/>
        <dbReference type="ChEBI" id="CHEBI:83099"/>
        <dbReference type="ChEBI" id="CHEBI:83100"/>
        <dbReference type="EC" id="1.8.1.4"/>
    </reaction>
</comment>
<comment type="cofactor">
    <cofactor evidence="1">
        <name>FAD</name>
        <dbReference type="ChEBI" id="CHEBI:57692"/>
    </cofactor>
    <text evidence="1">Binds 1 FAD per subunit.</text>
</comment>
<comment type="subunit">
    <text evidence="1">Homodimer.</text>
</comment>
<comment type="subcellular location">
    <subcellularLocation>
        <location evidence="1">Cytoplasm</location>
    </subcellularLocation>
</comment>
<comment type="miscellaneous">
    <text evidence="1">The active site is a redox-active disulfide bond.</text>
</comment>
<comment type="similarity">
    <text evidence="2">Belongs to the class-I pyridine nucleotide-disulfide oxidoreductase family.</text>
</comment>
<organism>
    <name type="scientific">Buchnera aphidicola subsp. Schizaphis graminum (strain Sg)</name>
    <dbReference type="NCBI Taxonomy" id="198804"/>
    <lineage>
        <taxon>Bacteria</taxon>
        <taxon>Pseudomonadati</taxon>
        <taxon>Pseudomonadota</taxon>
        <taxon>Gammaproteobacteria</taxon>
        <taxon>Enterobacterales</taxon>
        <taxon>Erwiniaceae</taxon>
        <taxon>Buchnera</taxon>
    </lineage>
</organism>
<name>DLDH_BUCAP</name>
<dbReference type="EC" id="1.8.1.4"/>
<dbReference type="EMBL" id="AE013218">
    <property type="protein sequence ID" value="AAM67765.1"/>
    <property type="molecule type" value="Genomic_DNA"/>
</dbReference>
<dbReference type="RefSeq" id="WP_011053732.1">
    <property type="nucleotide sequence ID" value="NC_004061.1"/>
</dbReference>
<dbReference type="SMR" id="Q8K9T7"/>
<dbReference type="STRING" id="198804.BUsg_201"/>
<dbReference type="GeneID" id="93003668"/>
<dbReference type="KEGG" id="bas:BUsg_201"/>
<dbReference type="eggNOG" id="COG1249">
    <property type="taxonomic scope" value="Bacteria"/>
</dbReference>
<dbReference type="HOGENOM" id="CLU_016755_0_1_6"/>
<dbReference type="Proteomes" id="UP000000416">
    <property type="component" value="Chromosome"/>
</dbReference>
<dbReference type="GO" id="GO:0005737">
    <property type="term" value="C:cytoplasm"/>
    <property type="evidence" value="ECO:0007669"/>
    <property type="project" value="UniProtKB-SubCell"/>
</dbReference>
<dbReference type="GO" id="GO:0004148">
    <property type="term" value="F:dihydrolipoyl dehydrogenase (NADH) activity"/>
    <property type="evidence" value="ECO:0007669"/>
    <property type="project" value="UniProtKB-EC"/>
</dbReference>
<dbReference type="GO" id="GO:0050660">
    <property type="term" value="F:flavin adenine dinucleotide binding"/>
    <property type="evidence" value="ECO:0007669"/>
    <property type="project" value="InterPro"/>
</dbReference>
<dbReference type="GO" id="GO:0006103">
    <property type="term" value="P:2-oxoglutarate metabolic process"/>
    <property type="evidence" value="ECO:0007669"/>
    <property type="project" value="TreeGrafter"/>
</dbReference>
<dbReference type="FunFam" id="3.30.390.30:FF:000001">
    <property type="entry name" value="Dihydrolipoyl dehydrogenase"/>
    <property type="match status" value="1"/>
</dbReference>
<dbReference type="Gene3D" id="3.30.390.30">
    <property type="match status" value="1"/>
</dbReference>
<dbReference type="Gene3D" id="3.50.50.60">
    <property type="entry name" value="FAD/NAD(P)-binding domain"/>
    <property type="match status" value="2"/>
</dbReference>
<dbReference type="InterPro" id="IPR050151">
    <property type="entry name" value="Class-I_Pyr_Nuc-Dis_Oxidored"/>
</dbReference>
<dbReference type="InterPro" id="IPR036188">
    <property type="entry name" value="FAD/NAD-bd_sf"/>
</dbReference>
<dbReference type="InterPro" id="IPR023753">
    <property type="entry name" value="FAD/NAD-binding_dom"/>
</dbReference>
<dbReference type="InterPro" id="IPR016156">
    <property type="entry name" value="FAD/NAD-linked_Rdtase_dimer_sf"/>
</dbReference>
<dbReference type="InterPro" id="IPR006258">
    <property type="entry name" value="Lipoamide_DH"/>
</dbReference>
<dbReference type="InterPro" id="IPR001100">
    <property type="entry name" value="Pyr_nuc-diS_OxRdtase"/>
</dbReference>
<dbReference type="InterPro" id="IPR004099">
    <property type="entry name" value="Pyr_nucl-diS_OxRdtase_dimer"/>
</dbReference>
<dbReference type="InterPro" id="IPR012999">
    <property type="entry name" value="Pyr_OxRdtase_I_AS"/>
</dbReference>
<dbReference type="NCBIfam" id="TIGR01350">
    <property type="entry name" value="lipoamide_DH"/>
    <property type="match status" value="1"/>
</dbReference>
<dbReference type="PANTHER" id="PTHR22912:SF160">
    <property type="entry name" value="DIHYDROLIPOYL DEHYDROGENASE"/>
    <property type="match status" value="1"/>
</dbReference>
<dbReference type="PANTHER" id="PTHR22912">
    <property type="entry name" value="DISULFIDE OXIDOREDUCTASE"/>
    <property type="match status" value="1"/>
</dbReference>
<dbReference type="Pfam" id="PF07992">
    <property type="entry name" value="Pyr_redox_2"/>
    <property type="match status" value="1"/>
</dbReference>
<dbReference type="Pfam" id="PF02852">
    <property type="entry name" value="Pyr_redox_dim"/>
    <property type="match status" value="1"/>
</dbReference>
<dbReference type="PIRSF" id="PIRSF000350">
    <property type="entry name" value="Mercury_reductase_MerA"/>
    <property type="match status" value="1"/>
</dbReference>
<dbReference type="PRINTS" id="PR00368">
    <property type="entry name" value="FADPNR"/>
</dbReference>
<dbReference type="PRINTS" id="PR00411">
    <property type="entry name" value="PNDRDTASEI"/>
</dbReference>
<dbReference type="SUPFAM" id="SSF51905">
    <property type="entry name" value="FAD/NAD(P)-binding domain"/>
    <property type="match status" value="1"/>
</dbReference>
<dbReference type="SUPFAM" id="SSF55424">
    <property type="entry name" value="FAD/NAD-linked reductases, dimerisation (C-terminal) domain"/>
    <property type="match status" value="1"/>
</dbReference>
<dbReference type="PROSITE" id="PS00076">
    <property type="entry name" value="PYRIDINE_REDOX_1"/>
    <property type="match status" value="1"/>
</dbReference>